<feature type="chain" id="PRO_0000216200" description="UPF0181 protein YoaH">
    <location>
        <begin position="1"/>
        <end position="59"/>
    </location>
</feature>
<sequence length="59" mass="6514">MFAGLPSLSHEQQQKAVERIQELMSQGMSSGEAIAQVAGELRANHTGERIVARFEDEDE</sequence>
<gene>
    <name evidence="1" type="primary">yoaH</name>
    <name type="ordered locus">STY1953</name>
    <name type="ordered locus">t1054</name>
</gene>
<reference key="1">
    <citation type="journal article" date="2001" name="Nature">
        <title>Complete genome sequence of a multiple drug resistant Salmonella enterica serovar Typhi CT18.</title>
        <authorList>
            <person name="Parkhill J."/>
            <person name="Dougan G."/>
            <person name="James K.D."/>
            <person name="Thomson N.R."/>
            <person name="Pickard D."/>
            <person name="Wain J."/>
            <person name="Churcher C.M."/>
            <person name="Mungall K.L."/>
            <person name="Bentley S.D."/>
            <person name="Holden M.T.G."/>
            <person name="Sebaihia M."/>
            <person name="Baker S."/>
            <person name="Basham D."/>
            <person name="Brooks K."/>
            <person name="Chillingworth T."/>
            <person name="Connerton P."/>
            <person name="Cronin A."/>
            <person name="Davis P."/>
            <person name="Davies R.M."/>
            <person name="Dowd L."/>
            <person name="White N."/>
            <person name="Farrar J."/>
            <person name="Feltwell T."/>
            <person name="Hamlin N."/>
            <person name="Haque A."/>
            <person name="Hien T.T."/>
            <person name="Holroyd S."/>
            <person name="Jagels K."/>
            <person name="Krogh A."/>
            <person name="Larsen T.S."/>
            <person name="Leather S."/>
            <person name="Moule S."/>
            <person name="O'Gaora P."/>
            <person name="Parry C."/>
            <person name="Quail M.A."/>
            <person name="Rutherford K.M."/>
            <person name="Simmonds M."/>
            <person name="Skelton J."/>
            <person name="Stevens K."/>
            <person name="Whitehead S."/>
            <person name="Barrell B.G."/>
        </authorList>
    </citation>
    <scope>NUCLEOTIDE SEQUENCE [LARGE SCALE GENOMIC DNA]</scope>
    <source>
        <strain>CT18</strain>
    </source>
</reference>
<reference key="2">
    <citation type="journal article" date="2003" name="J. Bacteriol.">
        <title>Comparative genomics of Salmonella enterica serovar Typhi strains Ty2 and CT18.</title>
        <authorList>
            <person name="Deng W."/>
            <person name="Liou S.-R."/>
            <person name="Plunkett G. III"/>
            <person name="Mayhew G.F."/>
            <person name="Rose D.J."/>
            <person name="Burland V."/>
            <person name="Kodoyianni V."/>
            <person name="Schwartz D.C."/>
            <person name="Blattner F.R."/>
        </authorList>
    </citation>
    <scope>NUCLEOTIDE SEQUENCE [LARGE SCALE GENOMIC DNA]</scope>
    <source>
        <strain>ATCC 700931 / Ty2</strain>
    </source>
</reference>
<evidence type="ECO:0000255" key="1">
    <source>
        <dbReference type="HAMAP-Rule" id="MF_00507"/>
    </source>
</evidence>
<protein>
    <recommendedName>
        <fullName evidence="1">UPF0181 protein YoaH</fullName>
    </recommendedName>
</protein>
<proteinExistence type="inferred from homology"/>
<organism>
    <name type="scientific">Salmonella typhi</name>
    <dbReference type="NCBI Taxonomy" id="90370"/>
    <lineage>
        <taxon>Bacteria</taxon>
        <taxon>Pseudomonadati</taxon>
        <taxon>Pseudomonadota</taxon>
        <taxon>Gammaproteobacteria</taxon>
        <taxon>Enterobacterales</taxon>
        <taxon>Enterobacteriaceae</taxon>
        <taxon>Salmonella</taxon>
    </lineage>
</organism>
<accession>P0A2M4</accession>
<accession>P56505</accession>
<comment type="similarity">
    <text evidence="1">Belongs to the UPF0181 family.</text>
</comment>
<name>YOAH_SALTI</name>
<dbReference type="EMBL" id="AL513382">
    <property type="protein sequence ID" value="CAD05506.1"/>
    <property type="molecule type" value="Genomic_DNA"/>
</dbReference>
<dbReference type="EMBL" id="AE014613">
    <property type="protein sequence ID" value="AAO68720.1"/>
    <property type="molecule type" value="Genomic_DNA"/>
</dbReference>
<dbReference type="RefSeq" id="NP_456330.1">
    <property type="nucleotide sequence ID" value="NC_003198.1"/>
</dbReference>
<dbReference type="RefSeq" id="WP_000457328.1">
    <property type="nucleotide sequence ID" value="NZ_WSUR01000004.1"/>
</dbReference>
<dbReference type="SMR" id="P0A2M4"/>
<dbReference type="STRING" id="220341.gene:17585871"/>
<dbReference type="KEGG" id="stt:t1054"/>
<dbReference type="KEGG" id="sty:STY1953"/>
<dbReference type="PATRIC" id="fig|220341.7.peg.1970"/>
<dbReference type="eggNOG" id="COG3140">
    <property type="taxonomic scope" value="Bacteria"/>
</dbReference>
<dbReference type="HOGENOM" id="CLU_185263_0_0_6"/>
<dbReference type="OMA" id="QNHQGAR"/>
<dbReference type="OrthoDB" id="6522084at2"/>
<dbReference type="Proteomes" id="UP000000541">
    <property type="component" value="Chromosome"/>
</dbReference>
<dbReference type="Proteomes" id="UP000002670">
    <property type="component" value="Chromosome"/>
</dbReference>
<dbReference type="HAMAP" id="MF_00507">
    <property type="entry name" value="UPF0181"/>
    <property type="match status" value="1"/>
</dbReference>
<dbReference type="InterPro" id="IPR005371">
    <property type="entry name" value="UPF0181"/>
</dbReference>
<dbReference type="NCBIfam" id="NF003476">
    <property type="entry name" value="PRK05114.1"/>
    <property type="match status" value="1"/>
</dbReference>
<dbReference type="Pfam" id="PF03701">
    <property type="entry name" value="UPF0181"/>
    <property type="match status" value="1"/>
</dbReference>